<keyword id="KW-0067">ATP-binding</keyword>
<keyword id="KW-0963">Cytoplasm</keyword>
<keyword id="KW-0436">Ligase</keyword>
<keyword id="KW-0547">Nucleotide-binding</keyword>
<comment type="function">
    <text evidence="1">Catalyzes the first step in the D-alanylation of lipoteichoic acid (LTA), the activation of D-alanine and its transfer onto the D-alanyl carrier protein (Dcp) DltC. In an ATP-dependent two-step reaction, forms a high energy D-alanyl-AMP intermediate, followed by transfer of the D-alanyl residue as a thiol ester to the phosphopantheinyl prosthetic group of the Dcp. D-alanylation of LTA plays an important role in modulating the properties of the cell wall in Gram-positive bacteria, influencing the net charge of the cell wall.</text>
</comment>
<comment type="catalytic activity">
    <reaction evidence="1">
        <text>holo-[D-alanyl-carrier protein] + D-alanine + ATP = D-alanyl-[D-alanyl-carrier protein] + AMP + diphosphate</text>
        <dbReference type="Rhea" id="RHEA:55132"/>
        <dbReference type="Rhea" id="RHEA-COMP:14102"/>
        <dbReference type="Rhea" id="RHEA-COMP:14103"/>
        <dbReference type="ChEBI" id="CHEBI:30616"/>
        <dbReference type="ChEBI" id="CHEBI:33019"/>
        <dbReference type="ChEBI" id="CHEBI:57416"/>
        <dbReference type="ChEBI" id="CHEBI:64479"/>
        <dbReference type="ChEBI" id="CHEBI:138620"/>
        <dbReference type="ChEBI" id="CHEBI:456215"/>
        <dbReference type="EC" id="6.2.1.54"/>
    </reaction>
</comment>
<comment type="pathway">
    <text evidence="1">Cell wall biogenesis; lipoteichoic acid biosynthesis.</text>
</comment>
<comment type="subcellular location">
    <subcellularLocation>
        <location evidence="1">Cytoplasm</location>
    </subcellularLocation>
</comment>
<comment type="similarity">
    <text evidence="1">Belongs to the ATP-dependent AMP-binding enzyme family. DltA subfamily.</text>
</comment>
<organism>
    <name type="scientific">Listeria monocytogenes serotype 4a (strain HCC23)</name>
    <dbReference type="NCBI Taxonomy" id="552536"/>
    <lineage>
        <taxon>Bacteria</taxon>
        <taxon>Bacillati</taxon>
        <taxon>Bacillota</taxon>
        <taxon>Bacilli</taxon>
        <taxon>Bacillales</taxon>
        <taxon>Listeriaceae</taxon>
        <taxon>Listeria</taxon>
    </lineage>
</organism>
<proteinExistence type="inferred from homology"/>
<accession>B8DEG2</accession>
<reference key="1">
    <citation type="journal article" date="2011" name="J. Bacteriol.">
        <title>Genome sequence of lineage III Listeria monocytogenes strain HCC23.</title>
        <authorList>
            <person name="Steele C.L."/>
            <person name="Donaldson J.R."/>
            <person name="Paul D."/>
            <person name="Banes M.M."/>
            <person name="Arick T."/>
            <person name="Bridges S.M."/>
            <person name="Lawrence M.L."/>
        </authorList>
    </citation>
    <scope>NUCLEOTIDE SEQUENCE [LARGE SCALE GENOMIC DNA]</scope>
    <source>
        <strain>HCC23</strain>
    </source>
</reference>
<evidence type="ECO:0000255" key="1">
    <source>
        <dbReference type="HAMAP-Rule" id="MF_00593"/>
    </source>
</evidence>
<gene>
    <name evidence="1" type="primary">dltA</name>
    <name type="ordered locus">LMHCC_1649</name>
</gene>
<sequence>MTTSIIERIDAWAEKTPDFPCYEYAGTRLSYKELKRQSDAFGSFLLNNLNTDKEKPIIVYGHMSPLMLIAFLGSIKSGRAYVPVDVSMPVERIEQIKKAADPSMFICTEELPSNLTITGCPVLSQEQLMDALEKHFDEVPDKAECVKNDDNYYIIYTSGSTGNPKGVQISQNNLVSFSNWILQDFSLRQGLRFLNQAPFSFDLSVMDLYPSLLSGGTLVPLDKTITANMKDLYREIPAQNFDVWVSTPSFADLCLLDENFNQENNPSLTRFLFCGEVLAKKTATELLDRFPDAVIYNTYGPTEATVAVTQVKVTRELIEAYPSLPLGVIKPDMRLHIVDQETGEILPEGEKGEIILIGASVSKGYLNEPEKTDQVFFDYKGYQAYHTGDSGIIKDGYLFFQGRLDFQIKLHGYRIELEDIENNLKKVSYIQNCAIIPKMKDEKVDMLVAQVIPTNHDFEKEYQLSAAIKNELKEFMPAYMIPRKWIYKTEFPLTMNGKIDRKALNSEVNK</sequence>
<dbReference type="EC" id="6.2.1.54" evidence="1"/>
<dbReference type="EMBL" id="CP001175">
    <property type="protein sequence ID" value="ACK39991.1"/>
    <property type="molecule type" value="Genomic_DNA"/>
</dbReference>
<dbReference type="RefSeq" id="WP_012581621.1">
    <property type="nucleotide sequence ID" value="NC_011660.1"/>
</dbReference>
<dbReference type="SMR" id="B8DEG2"/>
<dbReference type="KEGG" id="lmh:LMHCC_1649"/>
<dbReference type="HOGENOM" id="CLU_000022_2_12_9"/>
<dbReference type="UniPathway" id="UPA00556"/>
<dbReference type="GO" id="GO:0005737">
    <property type="term" value="C:cytoplasm"/>
    <property type="evidence" value="ECO:0007669"/>
    <property type="project" value="UniProtKB-SubCell"/>
</dbReference>
<dbReference type="GO" id="GO:0005524">
    <property type="term" value="F:ATP binding"/>
    <property type="evidence" value="ECO:0007669"/>
    <property type="project" value="UniProtKB-KW"/>
</dbReference>
<dbReference type="GO" id="GO:0047473">
    <property type="term" value="F:D-alanine [D-alanyl carrier protein] ligase activity"/>
    <property type="evidence" value="ECO:0007669"/>
    <property type="project" value="UniProtKB-UniRule"/>
</dbReference>
<dbReference type="GO" id="GO:0070395">
    <property type="term" value="P:lipoteichoic acid biosynthetic process"/>
    <property type="evidence" value="ECO:0007669"/>
    <property type="project" value="UniProtKB-UniRule"/>
</dbReference>
<dbReference type="CDD" id="cd05945">
    <property type="entry name" value="DltA"/>
    <property type="match status" value="1"/>
</dbReference>
<dbReference type="FunFam" id="3.30.300.30:FF:000012">
    <property type="entry name" value="D-alanine--D-alanyl carrier protein ligase"/>
    <property type="match status" value="1"/>
</dbReference>
<dbReference type="Gene3D" id="3.30.300.30">
    <property type="match status" value="1"/>
</dbReference>
<dbReference type="Gene3D" id="3.40.50.12780">
    <property type="entry name" value="N-terminal domain of ligase-like"/>
    <property type="match status" value="1"/>
</dbReference>
<dbReference type="HAMAP" id="MF_00593">
    <property type="entry name" value="DltA"/>
    <property type="match status" value="1"/>
</dbReference>
<dbReference type="InterPro" id="IPR010071">
    <property type="entry name" value="AA_adenyl_dom"/>
</dbReference>
<dbReference type="InterPro" id="IPR025110">
    <property type="entry name" value="AMP-bd_C"/>
</dbReference>
<dbReference type="InterPro" id="IPR045851">
    <property type="entry name" value="AMP-bd_C_sf"/>
</dbReference>
<dbReference type="InterPro" id="IPR020845">
    <property type="entry name" value="AMP-binding_CS"/>
</dbReference>
<dbReference type="InterPro" id="IPR000873">
    <property type="entry name" value="AMP-dep_synth/lig_dom"/>
</dbReference>
<dbReference type="InterPro" id="IPR042099">
    <property type="entry name" value="ANL_N_sf"/>
</dbReference>
<dbReference type="InterPro" id="IPR010072">
    <property type="entry name" value="DltA"/>
</dbReference>
<dbReference type="InterPro" id="IPR044507">
    <property type="entry name" value="DltA-like"/>
</dbReference>
<dbReference type="NCBIfam" id="TIGR01733">
    <property type="entry name" value="AA-adenyl-dom"/>
    <property type="match status" value="1"/>
</dbReference>
<dbReference type="NCBIfam" id="TIGR01734">
    <property type="entry name" value="D-ala-DACP-lig"/>
    <property type="match status" value="1"/>
</dbReference>
<dbReference type="NCBIfam" id="NF003417">
    <property type="entry name" value="PRK04813.1"/>
    <property type="match status" value="1"/>
</dbReference>
<dbReference type="PANTHER" id="PTHR45398">
    <property type="match status" value="1"/>
</dbReference>
<dbReference type="PANTHER" id="PTHR45398:SF1">
    <property type="entry name" value="ENZYME, PUTATIVE (JCVI)-RELATED"/>
    <property type="match status" value="1"/>
</dbReference>
<dbReference type="Pfam" id="PF00501">
    <property type="entry name" value="AMP-binding"/>
    <property type="match status" value="1"/>
</dbReference>
<dbReference type="Pfam" id="PF13193">
    <property type="entry name" value="AMP-binding_C"/>
    <property type="match status" value="1"/>
</dbReference>
<dbReference type="SUPFAM" id="SSF56801">
    <property type="entry name" value="Acetyl-CoA synthetase-like"/>
    <property type="match status" value="1"/>
</dbReference>
<dbReference type="PROSITE" id="PS00455">
    <property type="entry name" value="AMP_BINDING"/>
    <property type="match status" value="1"/>
</dbReference>
<feature type="chain" id="PRO_1000146972" description="D-alanine--D-alanyl carrier protein ligase">
    <location>
        <begin position="1"/>
        <end position="510"/>
    </location>
</feature>
<feature type="binding site" evidence="1">
    <location>
        <begin position="157"/>
        <end position="158"/>
    </location>
    <ligand>
        <name>ATP</name>
        <dbReference type="ChEBI" id="CHEBI:30616"/>
    </ligand>
</feature>
<feature type="binding site" evidence="1">
    <location>
        <position position="202"/>
    </location>
    <ligand>
        <name>D-alanine</name>
        <dbReference type="ChEBI" id="CHEBI:57416"/>
    </ligand>
</feature>
<feature type="binding site" evidence="1">
    <location>
        <begin position="297"/>
        <end position="302"/>
    </location>
    <ligand>
        <name>ATP</name>
        <dbReference type="ChEBI" id="CHEBI:30616"/>
    </ligand>
</feature>
<feature type="binding site" evidence="1">
    <location>
        <position position="306"/>
    </location>
    <ligand>
        <name>D-alanine</name>
        <dbReference type="ChEBI" id="CHEBI:57416"/>
    </ligand>
</feature>
<feature type="binding site" evidence="1">
    <location>
        <position position="389"/>
    </location>
    <ligand>
        <name>ATP</name>
        <dbReference type="ChEBI" id="CHEBI:30616"/>
    </ligand>
</feature>
<feature type="binding site" evidence="1">
    <location>
        <position position="498"/>
    </location>
    <ligand>
        <name>ATP</name>
        <dbReference type="ChEBI" id="CHEBI:30616"/>
    </ligand>
</feature>
<feature type="binding site" evidence="1">
    <location>
        <position position="498"/>
    </location>
    <ligand>
        <name>D-alanine</name>
        <dbReference type="ChEBI" id="CHEBI:57416"/>
    </ligand>
</feature>
<protein>
    <recommendedName>
        <fullName evidence="1">D-alanine--D-alanyl carrier protein ligase</fullName>
        <shortName evidence="1">DCL</shortName>
        <ecNumber evidence="1">6.2.1.54</ecNumber>
    </recommendedName>
    <alternativeName>
        <fullName evidence="1">D-alanine--poly(phosphoribitol) ligase subunit 1</fullName>
    </alternativeName>
    <alternativeName>
        <fullName evidence="1">D-alanine-activating enzyme</fullName>
        <shortName evidence="1">DAE</shortName>
    </alternativeName>
</protein>
<name>DLTA_LISMH</name>